<reference key="1">
    <citation type="journal article" date="1996" name="DNA Res.">
        <title>A 718-kb DNA sequence of the Escherichia coli K-12 genome corresponding to the 12.7-28.0 min region on the linkage map.</title>
        <authorList>
            <person name="Oshima T."/>
            <person name="Aiba H."/>
            <person name="Baba T."/>
            <person name="Fujita K."/>
            <person name="Hayashi K."/>
            <person name="Honjo A."/>
            <person name="Ikemoto K."/>
            <person name="Inada T."/>
            <person name="Itoh T."/>
            <person name="Kajihara M."/>
            <person name="Kanai K."/>
            <person name="Kashimoto K."/>
            <person name="Kimura S."/>
            <person name="Kitagawa M."/>
            <person name="Makino K."/>
            <person name="Masuda S."/>
            <person name="Miki T."/>
            <person name="Mizobuchi K."/>
            <person name="Mori H."/>
            <person name="Motomura K."/>
            <person name="Nakamura Y."/>
            <person name="Nashimoto H."/>
            <person name="Nishio Y."/>
            <person name="Saito N."/>
            <person name="Sampei G."/>
            <person name="Seki Y."/>
            <person name="Tagami H."/>
            <person name="Takemoto K."/>
            <person name="Wada C."/>
            <person name="Yamamoto Y."/>
            <person name="Yano M."/>
            <person name="Horiuchi T."/>
        </authorList>
    </citation>
    <scope>NUCLEOTIDE SEQUENCE [LARGE SCALE GENOMIC DNA]</scope>
    <source>
        <strain>K12 / W3110 / ATCC 27325 / DSM 5911</strain>
    </source>
</reference>
<reference key="2">
    <citation type="journal article" date="1997" name="Science">
        <title>The complete genome sequence of Escherichia coli K-12.</title>
        <authorList>
            <person name="Blattner F.R."/>
            <person name="Plunkett G. III"/>
            <person name="Bloch C.A."/>
            <person name="Perna N.T."/>
            <person name="Burland V."/>
            <person name="Riley M."/>
            <person name="Collado-Vides J."/>
            <person name="Glasner J.D."/>
            <person name="Rode C.K."/>
            <person name="Mayhew G.F."/>
            <person name="Gregor J."/>
            <person name="Davis N.W."/>
            <person name="Kirkpatrick H.A."/>
            <person name="Goeden M.A."/>
            <person name="Rose D.J."/>
            <person name="Mau B."/>
            <person name="Shao Y."/>
        </authorList>
    </citation>
    <scope>NUCLEOTIDE SEQUENCE [LARGE SCALE GENOMIC DNA]</scope>
    <source>
        <strain>K12 / MG1655 / ATCC 47076</strain>
    </source>
</reference>
<reference key="3">
    <citation type="journal article" date="2006" name="Mol. Syst. Biol.">
        <title>Highly accurate genome sequences of Escherichia coli K-12 strains MG1655 and W3110.</title>
        <authorList>
            <person name="Hayashi K."/>
            <person name="Morooka N."/>
            <person name="Yamamoto Y."/>
            <person name="Fujita K."/>
            <person name="Isono K."/>
            <person name="Choi S."/>
            <person name="Ohtsubo E."/>
            <person name="Baba T."/>
            <person name="Wanner B.L."/>
            <person name="Mori H."/>
            <person name="Horiuchi T."/>
        </authorList>
    </citation>
    <scope>NUCLEOTIDE SEQUENCE [LARGE SCALE GENOMIC DNA]</scope>
    <source>
        <strain>K12 / W3110 / ATCC 27325 / DSM 5911</strain>
    </source>
</reference>
<reference key="4">
    <citation type="journal article" date="2005" name="Science">
        <title>Global topology analysis of the Escherichia coli inner membrane proteome.</title>
        <authorList>
            <person name="Daley D.O."/>
            <person name="Rapp M."/>
            <person name="Granseth E."/>
            <person name="Melen K."/>
            <person name="Drew D."/>
            <person name="von Heijne G."/>
        </authorList>
    </citation>
    <scope>TOPOLOGY [LARGE SCALE ANALYSIS]</scope>
    <scope>SUBCELLULAR LOCATION</scope>
    <source>
        <strain>K12 / MG1655 / ATCC 47076</strain>
    </source>
</reference>
<reference key="5">
    <citation type="journal article" date="2008" name="Mol. Microbiol.">
        <title>The RNA binding protein CsrA controls cyclic di-GMP metabolism by directly regulating the expression of GGDEF proteins.</title>
        <authorList>
            <person name="Jonas K."/>
            <person name="Edwards A.N."/>
            <person name="Simm R."/>
            <person name="Romeo T."/>
            <person name="Romling U."/>
            <person name="Melefors O."/>
        </authorList>
    </citation>
    <scope>PROBABLE ENZYME ACTIVITY</scope>
    <scope>FUNCTION</scope>
    <scope>MUTAGENESIS OF 359-GLY-GLY-360</scope>
    <scope>DISRUPTION PHENOTYPE</scope>
    <scope>POST-TRANSCRIPTIONAL REGULATION BY CSRA</scope>
    <source>
        <strain>K12</strain>
    </source>
</reference>
<reference key="6">
    <citation type="journal article" date="2009" name="Microbiology">
        <title>Gene expression patterns and differential input into curli fimbriae regulation of all GGDEF/EAL domain proteins in Escherichia coli.</title>
        <authorList>
            <person name="Sommerfeldt N."/>
            <person name="Possling A."/>
            <person name="Becker G."/>
            <person name="Pesavento C."/>
            <person name="Tschowri N."/>
            <person name="Hengge R."/>
        </authorList>
    </citation>
    <scope>INDUCTION</scope>
    <source>
        <strain>K12 / W3110 / ATCC 27325 / DSM 5911</strain>
    </source>
</reference>
<reference key="7">
    <citation type="journal article" date="2015" name="J. Bacteriol.">
        <title>Systematic nomenclature for GGDEF and EAL domain-containing cyclic di-GMP turnover proteins of Escherichia coli.</title>
        <authorList>
            <person name="Hengge R."/>
            <person name="Galperin M.Y."/>
            <person name="Ghigo J.M."/>
            <person name="Gomelsky M."/>
            <person name="Green J."/>
            <person name="Hughes K.T."/>
            <person name="Jenal U."/>
            <person name="Landini P."/>
        </authorList>
    </citation>
    <scope>NOMENCLATURE</scope>
</reference>
<evidence type="ECO:0000250" key="1"/>
<evidence type="ECO:0000250" key="2">
    <source>
        <dbReference type="UniProtKB" id="P31129"/>
    </source>
</evidence>
<evidence type="ECO:0000255" key="3"/>
<evidence type="ECO:0000255" key="4">
    <source>
        <dbReference type="PROSITE-ProRule" id="PRU00095"/>
    </source>
</evidence>
<evidence type="ECO:0000269" key="5">
    <source>
    </source>
</evidence>
<evidence type="ECO:0000269" key="6">
    <source>
    </source>
</evidence>
<evidence type="ECO:0000269" key="7">
    <source>
    </source>
</evidence>
<evidence type="ECO:0000303" key="8">
    <source>
    </source>
</evidence>
<evidence type="ECO:0000305" key="9"/>
<evidence type="ECO:0000305" key="10">
    <source>
    </source>
</evidence>
<comment type="function">
    <text evidence="6">Probably catalyzes the synthesis of cyclic-di-GMP (c-di-GMP) via the condensation of 2 GTP molecules. Overexpression leads to a strong repression of swimming; swimming returns to normal when residues 359-360 are both mutated to Ala. Overexpression also leads to a 20-fold increase in c-di-GMP levels in vivo. Cyclic-di-GMP is a second messenger which controls cell surface-associated traits in bacteria.</text>
</comment>
<comment type="catalytic activity">
    <reaction evidence="10">
        <text>2 GTP = 3',3'-c-di-GMP + 2 diphosphate</text>
        <dbReference type="Rhea" id="RHEA:24898"/>
        <dbReference type="ChEBI" id="CHEBI:33019"/>
        <dbReference type="ChEBI" id="CHEBI:37565"/>
        <dbReference type="ChEBI" id="CHEBI:58805"/>
        <dbReference type="EC" id="2.7.7.65"/>
    </reaction>
</comment>
<comment type="cofactor">
    <cofactor evidence="2">
        <name>Mg(2+)</name>
        <dbReference type="ChEBI" id="CHEBI:18420"/>
    </cofactor>
    <text evidence="2">Binds 1 Mg(2+) ion per monomer.</text>
</comment>
<comment type="pathway">
    <text evidence="9">Purine metabolism; 3',5'-cyclic di-GMP biosynthesis.</text>
</comment>
<comment type="subunit">
    <text evidence="1">Homodimer.</text>
</comment>
<comment type="subcellular location">
    <subcellularLocation>
        <location evidence="5">Cell inner membrane</location>
        <topology evidence="3">Multi-pass membrane protein</topology>
    </subcellularLocation>
</comment>
<comment type="induction">
    <text evidence="6 7">CsrA binds to the mRNA and reduces its levels. Expressed at low levels at both 28 and 37 degrees Celsius.</text>
</comment>
<comment type="disruption phenotype">
    <text evidence="6">A slight increase in motility. No visible effect on curli production.</text>
</comment>
<organism>
    <name type="scientific">Escherichia coli (strain K12)</name>
    <dbReference type="NCBI Taxonomy" id="83333"/>
    <lineage>
        <taxon>Bacteria</taxon>
        <taxon>Pseudomonadati</taxon>
        <taxon>Pseudomonadota</taxon>
        <taxon>Gammaproteobacteria</taxon>
        <taxon>Enterobacterales</taxon>
        <taxon>Enterobacteriaceae</taxon>
        <taxon>Escherichia</taxon>
    </lineage>
</organism>
<accession>P75908</accession>
<accession>Q9R7P4</accession>
<accession>Q9R7P6</accession>
<protein>
    <recommendedName>
        <fullName evidence="9">Probable diguanylate cyclase DgcT</fullName>
        <shortName>DGC</shortName>
        <ecNumber evidence="10">2.7.7.65</ecNumber>
    </recommendedName>
</protein>
<dbReference type="EC" id="2.7.7.65" evidence="10"/>
<dbReference type="EMBL" id="U00096">
    <property type="protein sequence ID" value="AAC74110.1"/>
    <property type="molecule type" value="Genomic_DNA"/>
</dbReference>
<dbReference type="EMBL" id="AP009048">
    <property type="protein sequence ID" value="BAA35810.2"/>
    <property type="molecule type" value="Genomic_DNA"/>
</dbReference>
<dbReference type="PIR" id="G64844">
    <property type="entry name" value="G64844"/>
</dbReference>
<dbReference type="RefSeq" id="NP_415544.1">
    <property type="nucleotide sequence ID" value="NC_000913.3"/>
</dbReference>
<dbReference type="RefSeq" id="WP_000409873.1">
    <property type="nucleotide sequence ID" value="NZ_LN832404.1"/>
</dbReference>
<dbReference type="SMR" id="P75908"/>
<dbReference type="BioGRID" id="4263227">
    <property type="interactions" value="10"/>
</dbReference>
<dbReference type="FunCoup" id="P75908">
    <property type="interactions" value="148"/>
</dbReference>
<dbReference type="STRING" id="511145.b1025"/>
<dbReference type="PaxDb" id="511145-b1025"/>
<dbReference type="EnsemblBacteria" id="AAC74110">
    <property type="protein sequence ID" value="AAC74110"/>
    <property type="gene ID" value="b1025"/>
</dbReference>
<dbReference type="GeneID" id="945593"/>
<dbReference type="KEGG" id="ecj:JW5143"/>
<dbReference type="KEGG" id="eco:b1025"/>
<dbReference type="PATRIC" id="fig|511145.12.peg.1065"/>
<dbReference type="EchoBASE" id="EB3626"/>
<dbReference type="eggNOG" id="COG3706">
    <property type="taxonomic scope" value="Bacteria"/>
</dbReference>
<dbReference type="HOGENOM" id="CLU_000445_11_31_6"/>
<dbReference type="InParanoid" id="P75908"/>
<dbReference type="OMA" id="IWNGVSV"/>
<dbReference type="OrthoDB" id="9812260at2"/>
<dbReference type="PhylomeDB" id="P75908"/>
<dbReference type="BioCyc" id="EcoCyc:G6532-MONOMER"/>
<dbReference type="BioCyc" id="MetaCyc:G6532-MONOMER"/>
<dbReference type="UniPathway" id="UPA00599"/>
<dbReference type="PRO" id="PR:P75908"/>
<dbReference type="Proteomes" id="UP000000625">
    <property type="component" value="Chromosome"/>
</dbReference>
<dbReference type="GO" id="GO:0005886">
    <property type="term" value="C:plasma membrane"/>
    <property type="evidence" value="ECO:0000314"/>
    <property type="project" value="EcoCyc"/>
</dbReference>
<dbReference type="GO" id="GO:0052621">
    <property type="term" value="F:diguanylate cyclase activity"/>
    <property type="evidence" value="ECO:0000315"/>
    <property type="project" value="EcoCyc"/>
</dbReference>
<dbReference type="GO" id="GO:0005525">
    <property type="term" value="F:GTP binding"/>
    <property type="evidence" value="ECO:0007669"/>
    <property type="project" value="UniProtKB-KW"/>
</dbReference>
<dbReference type="GO" id="GO:0046872">
    <property type="term" value="F:metal ion binding"/>
    <property type="evidence" value="ECO:0007669"/>
    <property type="project" value="UniProtKB-KW"/>
</dbReference>
<dbReference type="GO" id="GO:0061939">
    <property type="term" value="P:c-di-GMP signaling"/>
    <property type="evidence" value="ECO:0000318"/>
    <property type="project" value="GO_Central"/>
</dbReference>
<dbReference type="GO" id="GO:0090609">
    <property type="term" value="P:single-species submerged biofilm formation"/>
    <property type="evidence" value="ECO:0000315"/>
    <property type="project" value="EcoCyc"/>
</dbReference>
<dbReference type="CDD" id="cd01949">
    <property type="entry name" value="GGDEF"/>
    <property type="match status" value="1"/>
</dbReference>
<dbReference type="FunFam" id="3.30.70.270:FF:000001">
    <property type="entry name" value="Diguanylate cyclase domain protein"/>
    <property type="match status" value="1"/>
</dbReference>
<dbReference type="Gene3D" id="3.30.70.270">
    <property type="match status" value="1"/>
</dbReference>
<dbReference type="InterPro" id="IPR052163">
    <property type="entry name" value="DGC-Regulatory_Protein"/>
</dbReference>
<dbReference type="InterPro" id="IPR000160">
    <property type="entry name" value="GGDEF_dom"/>
</dbReference>
<dbReference type="InterPro" id="IPR033424">
    <property type="entry name" value="MASE4"/>
</dbReference>
<dbReference type="InterPro" id="IPR029787">
    <property type="entry name" value="Nucleotide_cyclase"/>
</dbReference>
<dbReference type="InterPro" id="IPR043128">
    <property type="entry name" value="Rev_trsase/Diguanyl_cyclase"/>
</dbReference>
<dbReference type="NCBIfam" id="TIGR00254">
    <property type="entry name" value="GGDEF"/>
    <property type="match status" value="1"/>
</dbReference>
<dbReference type="PANTHER" id="PTHR46663">
    <property type="entry name" value="DIGUANYLATE CYCLASE DGCT-RELATED"/>
    <property type="match status" value="1"/>
</dbReference>
<dbReference type="PANTHER" id="PTHR46663:SF4">
    <property type="entry name" value="DIGUANYLATE CYCLASE DGCT-RELATED"/>
    <property type="match status" value="1"/>
</dbReference>
<dbReference type="Pfam" id="PF00990">
    <property type="entry name" value="GGDEF"/>
    <property type="match status" value="1"/>
</dbReference>
<dbReference type="Pfam" id="PF17158">
    <property type="entry name" value="MASE4"/>
    <property type="match status" value="1"/>
</dbReference>
<dbReference type="SMART" id="SM00267">
    <property type="entry name" value="GGDEF"/>
    <property type="match status" value="1"/>
</dbReference>
<dbReference type="SUPFAM" id="SSF55073">
    <property type="entry name" value="Nucleotide cyclase"/>
    <property type="match status" value="1"/>
</dbReference>
<dbReference type="PROSITE" id="PS50887">
    <property type="entry name" value="GGDEF"/>
    <property type="match status" value="1"/>
</dbReference>
<keyword id="KW-0997">Cell inner membrane</keyword>
<keyword id="KW-1003">Cell membrane</keyword>
<keyword id="KW-0342">GTP-binding</keyword>
<keyword id="KW-0460">Magnesium</keyword>
<keyword id="KW-0472">Membrane</keyword>
<keyword id="KW-0479">Metal-binding</keyword>
<keyword id="KW-0547">Nucleotide-binding</keyword>
<keyword id="KW-1185">Reference proteome</keyword>
<keyword id="KW-0808">Transferase</keyword>
<keyword id="KW-0812">Transmembrane</keyword>
<keyword id="KW-1133">Transmembrane helix</keyword>
<proteinExistence type="evidence at protein level"/>
<name>DGCT_ECOLI</name>
<sequence>MEKDYLRISSTVLVSLLFGLALVLVNSWFNQPGVEEVVPRSTYLMVMIALFFIDTVAFIFMQLYFIYDRRQFSNCVLSLAFLSCLIYFVITVIIIQQIIEERLTSSVVQNDIAIYYLFRQMSLCILIFLALVNKVSENTKQRNLFSKKMTLCISLFFVFGGPIVAHILSSHYESYNLHIAELTNENGQVVWKASYVTIMIFMWLTLLSVNLYFNGLRYDIWNGVTVIAFCAVLYNISLLFMSRYSVSTWYISRTIEVVSKLTVMVIFMCHIFSALRVTKNIAHRDPLTNIFNRNYFFNELTVQSASAQKTPYCVMIMDIDHFKKVNDTWGHPVGDQVIKTVVNIIGKSIRPDDLLARVGGEEFGVLLTDIDTERAKALAERIRENVERLTGDNPEYAIPQKVTISIGAVVTQENALNPNEIYRLADNALYEAKETGRNKVVVRDVVNFCESP</sequence>
<feature type="chain" id="PRO_0000168806" description="Probable diguanylate cyclase DgcT">
    <location>
        <begin position="1"/>
        <end position="452"/>
    </location>
</feature>
<feature type="topological domain" description="Cytoplasmic" evidence="9">
    <location>
        <begin position="1"/>
        <end position="7"/>
    </location>
</feature>
<feature type="transmembrane region" description="Helical" evidence="3">
    <location>
        <begin position="8"/>
        <end position="28"/>
    </location>
</feature>
<feature type="topological domain" description="Periplasmic" evidence="9">
    <location>
        <begin position="29"/>
        <end position="45"/>
    </location>
</feature>
<feature type="transmembrane region" description="Helical" evidence="3">
    <location>
        <begin position="46"/>
        <end position="66"/>
    </location>
</feature>
<feature type="topological domain" description="Cytoplasmic" evidence="9">
    <location>
        <begin position="67"/>
        <end position="74"/>
    </location>
</feature>
<feature type="transmembrane region" description="Helical" evidence="3">
    <location>
        <begin position="75"/>
        <end position="95"/>
    </location>
</feature>
<feature type="topological domain" description="Periplasmic" evidence="9">
    <location>
        <begin position="96"/>
        <end position="111"/>
    </location>
</feature>
<feature type="transmembrane region" description="Helical" evidence="3">
    <location>
        <begin position="112"/>
        <end position="132"/>
    </location>
</feature>
<feature type="topological domain" description="Cytoplasmic" evidence="9">
    <location>
        <begin position="133"/>
        <end position="148"/>
    </location>
</feature>
<feature type="transmembrane region" description="Helical" evidence="3">
    <location>
        <begin position="149"/>
        <end position="169"/>
    </location>
</feature>
<feature type="topological domain" description="Periplasmic" evidence="9">
    <location>
        <begin position="170"/>
        <end position="195"/>
    </location>
</feature>
<feature type="transmembrane region" description="Helical" evidence="3">
    <location>
        <begin position="196"/>
        <end position="216"/>
    </location>
</feature>
<feature type="topological domain" description="Cytoplasmic" evidence="9">
    <location>
        <begin position="217"/>
        <end position="219"/>
    </location>
</feature>
<feature type="transmembrane region" description="Helical" evidence="3">
    <location>
        <begin position="220"/>
        <end position="240"/>
    </location>
</feature>
<feature type="topological domain" description="Periplasmic" evidence="9">
    <location>
        <begin position="241"/>
        <end position="254"/>
    </location>
</feature>
<feature type="transmembrane region" description="Helical" evidence="3">
    <location>
        <begin position="255"/>
        <end position="275"/>
    </location>
</feature>
<feature type="topological domain" description="Cytoplasmic" evidence="5">
    <location>
        <begin position="276"/>
        <end position="452"/>
    </location>
</feature>
<feature type="domain" description="GGDEF" evidence="4">
    <location>
        <begin position="310"/>
        <end position="445"/>
    </location>
</feature>
<feature type="active site" description="Proton acceptor" evidence="3">
    <location>
        <position position="361"/>
    </location>
</feature>
<feature type="binding site" evidence="2">
    <location>
        <position position="318"/>
    </location>
    <ligand>
        <name>Mg(2+)</name>
        <dbReference type="ChEBI" id="CHEBI:18420"/>
    </ligand>
</feature>
<feature type="binding site" evidence="2">
    <location>
        <position position="319"/>
    </location>
    <ligand>
        <name>Mg(2+)</name>
        <dbReference type="ChEBI" id="CHEBI:18420"/>
    </ligand>
</feature>
<feature type="binding site" evidence="2">
    <location>
        <position position="326"/>
    </location>
    <ligand>
        <name>substrate</name>
    </ligand>
</feature>
<feature type="binding site" evidence="2">
    <location>
        <position position="331"/>
    </location>
    <ligand>
        <name>substrate</name>
    </ligand>
</feature>
<feature type="binding site" evidence="2">
    <location>
        <position position="335"/>
    </location>
    <ligand>
        <name>substrate</name>
    </ligand>
</feature>
<feature type="binding site" evidence="2">
    <location>
        <position position="361"/>
    </location>
    <ligand>
        <name>Mg(2+)</name>
        <dbReference type="ChEBI" id="CHEBI:18420"/>
    </ligand>
</feature>
<feature type="binding site" evidence="2">
    <location>
        <position position="381"/>
    </location>
    <ligand>
        <name>substrate</name>
    </ligand>
</feature>
<feature type="site" description="Transition state stabilizer" evidence="3">
    <location>
        <position position="323"/>
    </location>
</feature>
<feature type="sequence variant" description="In strain: K12 / W3110 / ATCC 27325 / DSM 5911.">
    <original>A</original>
    <variation>V</variation>
    <location>
        <position position="130"/>
    </location>
</feature>
<feature type="mutagenesis site" description="Cells overexpressing this mutant are no longer swimming suppressed." evidence="6">
    <original>GG</original>
    <variation>AA</variation>
    <location>
        <begin position="359"/>
        <end position="360"/>
    </location>
</feature>
<gene>
    <name evidence="8" type="primary">dgcT</name>
    <name type="synonym">ycdT</name>
    <name type="ordered locus">b1025</name>
    <name type="ordered locus">JW5143</name>
</gene>